<organism>
    <name type="scientific">Mus musculus</name>
    <name type="common">Mouse</name>
    <dbReference type="NCBI Taxonomy" id="10090"/>
    <lineage>
        <taxon>Eukaryota</taxon>
        <taxon>Metazoa</taxon>
        <taxon>Chordata</taxon>
        <taxon>Craniata</taxon>
        <taxon>Vertebrata</taxon>
        <taxon>Euteleostomi</taxon>
        <taxon>Mammalia</taxon>
        <taxon>Eutheria</taxon>
        <taxon>Euarchontoglires</taxon>
        <taxon>Glires</taxon>
        <taxon>Rodentia</taxon>
        <taxon>Myomorpha</taxon>
        <taxon>Muroidea</taxon>
        <taxon>Muridae</taxon>
        <taxon>Murinae</taxon>
        <taxon>Mus</taxon>
        <taxon>Mus</taxon>
    </lineage>
</organism>
<comment type="function">
    <text evidence="6">Modulates the assembly and organization of the microtubule cytoskeleton, and probably plays a role in regulating the orientation of the mitotic spindle and the orientation of the plane of cell division. Required for normal proliferation of neuronal progenitor cells in the developing brain and for normal brain development. Does not affect neuron migration per se.</text>
</comment>
<comment type="subunit">
    <text evidence="2 3 6 7">Homotrimer; self-association is mediated by the N-terminal coiled coil (By similarity). Does not interact with EML3 (By similarity). Binds unpolymerized tubulins via its WD repeat region (By similarity). Binds repolymerizing microtubules (PubMed:24859200). Interacts with TASOR (PubMed:31112734).</text>
</comment>
<comment type="subcellular location">
    <subcellularLocation>
        <location evidence="6">Cytoplasm</location>
    </subcellularLocation>
    <subcellularLocation>
        <location evidence="6">Cytoplasm</location>
        <location evidence="6">Perinuclear region</location>
    </subcellularLocation>
    <subcellularLocation>
        <location evidence="6">Cytoplasm</location>
        <location evidence="6">Cytoskeleton</location>
    </subcellularLocation>
    <text evidence="6">Detected in cytoplasmic punctae. Co-localizes with microtubules. Enriched in perinuclear regions during interphase and in the region of spindle microtubules during metaphase. Enriched at the midzone during telophase and cytokinesis. Detected at growth cones in neurons.</text>
</comment>
<comment type="alternative products">
    <event type="alternative splicing"/>
    <isoform>
        <id>Q05BC3-1</id>
        <name>1</name>
        <sequence type="displayed"/>
    </isoform>
    <isoform>
        <id>Q05BC3-2</id>
        <name>2</name>
        <sequence type="described" ref="VSP_024477"/>
    </isoform>
    <isoform>
        <id>Q05BC3-3</id>
        <name>3</name>
        <sequence type="described" ref="VSP_024478"/>
    </isoform>
</comment>
<comment type="tissue specificity">
    <text evidence="6 7">Detected in adult brain cortex, hippocampus and thalamus (PubMed:24859200). Expressed in the stomach, lungs and in Sertoli cells of the testis (PubMed:31112734).</text>
</comment>
<comment type="developmental stage">
    <text evidence="6">Detected from 13.5 dpc to the first day after birth in cortical neuron progenitor cells in the ventricular zone and in postmitotic neurons in the cortical plate.</text>
</comment>
<comment type="domain">
    <text evidence="2">Contains a tandem atypical propeller in EMLs (TAPE) domain. The N-terminal beta-propeller is formed by canonical WD repeats; in contrast, the second beta-propeller contains one blade that is formed by discontinuous parts of the polypeptide chain.</text>
</comment>
<comment type="domain">
    <text evidence="2">The N-terminal coiled coil is required for association with microtubules.</text>
</comment>
<comment type="disease">
    <text>Defects in Eml1 are the cause of the neuronal heterotopia observed in HeCo mice. These mice display heterotopic neurons in the rostro-medial part of the neocortex, together with epilepsy and subtle learning deficits in adults. At 17 dpc both Tbr1(+) and Cux1(+) neurons contribute to the heterotopia. Three days after birth, most Tbr1(+) have reached their final destination, but many Cux1(+) neurons remain in the heterotopia and fail to reach cortical layers II to IV, contrary to the situation in wild-type. Besides, progenitor cells continue to proliferate, resulting in large numbers of abnormally positioned actively proliferating cells during both early and late stages of corticogenesis. In HeCo mice, insertion of a retrotransposon into Eml1 leads to the absence of full-length Eml1 transcripts.</text>
</comment>
<comment type="similarity">
    <text evidence="9">Belongs to the WD repeat EMAP family.</text>
</comment>
<evidence type="ECO:0000250" key="1"/>
<evidence type="ECO:0000250" key="2">
    <source>
        <dbReference type="UniProtKB" id="O00423"/>
    </source>
</evidence>
<evidence type="ECO:0000250" key="3">
    <source>
        <dbReference type="UniProtKB" id="Q9HC35"/>
    </source>
</evidence>
<evidence type="ECO:0000255" key="4"/>
<evidence type="ECO:0000256" key="5">
    <source>
        <dbReference type="SAM" id="MobiDB-lite"/>
    </source>
</evidence>
<evidence type="ECO:0000269" key="6">
    <source>
    </source>
</evidence>
<evidence type="ECO:0000269" key="7">
    <source>
    </source>
</evidence>
<evidence type="ECO:0000303" key="8">
    <source>
    </source>
</evidence>
<evidence type="ECO:0000305" key="9"/>
<accession>Q05BC3</accession>
<accession>Q05AF8</accession>
<accession>Q0P5V3</accession>
<gene>
    <name type="primary">Eml1</name>
</gene>
<keyword id="KW-0025">Alternative splicing</keyword>
<keyword id="KW-0175">Coiled coil</keyword>
<keyword id="KW-0963">Cytoplasm</keyword>
<keyword id="KW-0206">Cytoskeleton</keyword>
<keyword id="KW-0225">Disease variant</keyword>
<keyword id="KW-0493">Microtubule</keyword>
<keyword id="KW-1185">Reference proteome</keyword>
<keyword id="KW-0677">Repeat</keyword>
<keyword id="KW-0853">WD repeat</keyword>
<proteinExistence type="evidence at protein level"/>
<feature type="chain" id="PRO_0000284386" description="Echinoderm microtubule-associated protein-like 1">
    <location>
        <begin position="1"/>
        <end position="814"/>
    </location>
</feature>
<feature type="repeat" description="WD 1">
    <location>
        <begin position="260"/>
        <end position="309"/>
    </location>
</feature>
<feature type="repeat" description="WD 2">
    <location>
        <begin position="314"/>
        <end position="357"/>
    </location>
</feature>
<feature type="repeat" description="WD 3">
    <location>
        <begin position="362"/>
        <end position="399"/>
    </location>
</feature>
<feature type="repeat" description="WD 4">
    <location>
        <begin position="408"/>
        <end position="445"/>
    </location>
</feature>
<feature type="repeat" description="WD 5">
    <location>
        <begin position="449"/>
        <end position="488"/>
    </location>
</feature>
<feature type="repeat" description="WD 6">
    <location>
        <begin position="492"/>
        <end position="529"/>
    </location>
</feature>
<feature type="repeat" description="WD 7">
    <location>
        <begin position="534"/>
        <end position="571"/>
    </location>
</feature>
<feature type="repeat" description="WD 8">
    <location>
        <begin position="577"/>
        <end position="612"/>
    </location>
</feature>
<feature type="repeat" description="WD 9">
    <location>
        <begin position="616"/>
        <end position="654"/>
    </location>
</feature>
<feature type="repeat" description="WD 10">
    <location>
        <begin position="663"/>
        <end position="700"/>
    </location>
</feature>
<feature type="repeat" description="WD 11">
    <location>
        <begin position="708"/>
        <end position="767"/>
    </location>
</feature>
<feature type="repeat" description="WD 12">
    <location>
        <begin position="774"/>
        <end position="813"/>
    </location>
</feature>
<feature type="region of interest" description="Disordered" evidence="5">
    <location>
        <begin position="77"/>
        <end position="180"/>
    </location>
</feature>
<feature type="region of interest" description="Tandem atypical propeller in EMLs" evidence="1">
    <location>
        <begin position="175"/>
        <end position="814"/>
    </location>
</feature>
<feature type="coiled-coil region" evidence="4">
    <location>
        <begin position="31"/>
        <end position="72"/>
    </location>
</feature>
<feature type="compositionally biased region" description="Polar residues" evidence="5">
    <location>
        <begin position="92"/>
        <end position="101"/>
    </location>
</feature>
<feature type="compositionally biased region" description="Low complexity" evidence="5">
    <location>
        <begin position="103"/>
        <end position="115"/>
    </location>
</feature>
<feature type="compositionally biased region" description="Polar residues" evidence="5">
    <location>
        <begin position="127"/>
        <end position="137"/>
    </location>
</feature>
<feature type="compositionally biased region" description="Basic and acidic residues" evidence="5">
    <location>
        <begin position="142"/>
        <end position="152"/>
    </location>
</feature>
<feature type="compositionally biased region" description="Low complexity" evidence="5">
    <location>
        <begin position="155"/>
        <end position="167"/>
    </location>
</feature>
<feature type="splice variant" id="VSP_024477" description="In isoform 2." evidence="8">
    <location>
        <begin position="1"/>
        <end position="31"/>
    </location>
</feature>
<feature type="splice variant" id="VSP_024478" description="In isoform 3." evidence="8">
    <original>P</original>
    <variation>PALQSPKPQGKRRVTHCK</variation>
    <location>
        <position position="181"/>
    </location>
</feature>
<feature type="mutagenesis site" description="Impairs tubulin binding." evidence="6">
    <original>T</original>
    <variation>A</variation>
    <location>
        <position position="242"/>
    </location>
</feature>
<feature type="sequence conflict" description="In Ref. 1; AAI25290." evidence="9" ref="1">
    <original>A</original>
    <variation>S</variation>
    <location>
        <position position="113"/>
    </location>
</feature>
<feature type="sequence conflict" description="In Ref. 1; AAH59839." evidence="9" ref="1">
    <original>G</original>
    <variation>C</variation>
    <location>
        <position position="669"/>
    </location>
</feature>
<name>EMAL1_MOUSE</name>
<dbReference type="EMBL" id="BC053094">
    <property type="protein sequence ID" value="AAH53094.2"/>
    <property type="molecule type" value="mRNA"/>
</dbReference>
<dbReference type="EMBL" id="BC059839">
    <property type="protein sequence ID" value="AAH59839.1"/>
    <property type="molecule type" value="mRNA"/>
</dbReference>
<dbReference type="EMBL" id="BC079582">
    <property type="protein sequence ID" value="AAH79582.1"/>
    <property type="molecule type" value="mRNA"/>
</dbReference>
<dbReference type="EMBL" id="BC125289">
    <property type="protein sequence ID" value="AAI25290.1"/>
    <property type="molecule type" value="mRNA"/>
</dbReference>
<dbReference type="CCDS" id="CCDS36555.1">
    <molecule id="Q05BC3-1"/>
</dbReference>
<dbReference type="CCDS" id="CCDS36556.1">
    <molecule id="Q05BC3-2"/>
</dbReference>
<dbReference type="RefSeq" id="NP_001036800.1">
    <molecule id="Q05BC3-1"/>
    <property type="nucleotide sequence ID" value="NM_001043335.1"/>
</dbReference>
<dbReference type="RefSeq" id="NP_001036801.1">
    <molecule id="Q05BC3-2"/>
    <property type="nucleotide sequence ID" value="NM_001043336.2"/>
</dbReference>
<dbReference type="RefSeq" id="NP_001273275.1">
    <property type="nucleotide sequence ID" value="NM_001286346.1"/>
</dbReference>
<dbReference type="RefSeq" id="NP_001273276.1">
    <property type="nucleotide sequence ID" value="NM_001286347.1"/>
</dbReference>
<dbReference type="RefSeq" id="NP_001351123.1">
    <molecule id="Q05BC3-3"/>
    <property type="nucleotide sequence ID" value="NM_001364194.1"/>
</dbReference>
<dbReference type="RefSeq" id="NP_001351126.1">
    <molecule id="Q05BC3-2"/>
    <property type="nucleotide sequence ID" value="NM_001364197.1"/>
</dbReference>
<dbReference type="RefSeq" id="XP_017170659.1">
    <property type="nucleotide sequence ID" value="XM_017315170.1"/>
</dbReference>
<dbReference type="RefSeq" id="XP_017170661.1">
    <property type="nucleotide sequence ID" value="XM_017315172.1"/>
</dbReference>
<dbReference type="SMR" id="Q05BC3"/>
<dbReference type="BioGRID" id="212902">
    <property type="interactions" value="3"/>
</dbReference>
<dbReference type="FunCoup" id="Q05BC3">
    <property type="interactions" value="244"/>
</dbReference>
<dbReference type="IntAct" id="Q05BC3">
    <property type="interactions" value="1"/>
</dbReference>
<dbReference type="STRING" id="10090.ENSMUSP00000105486"/>
<dbReference type="GlyGen" id="Q05BC3">
    <property type="glycosylation" value="2 sites, 1 O-linked glycan (2 sites)"/>
</dbReference>
<dbReference type="iPTMnet" id="Q05BC3"/>
<dbReference type="PhosphoSitePlus" id="Q05BC3"/>
<dbReference type="SwissPalm" id="Q05BC3"/>
<dbReference type="jPOST" id="Q05BC3"/>
<dbReference type="PaxDb" id="10090-ENSMUSP00000105486"/>
<dbReference type="ProteomicsDB" id="275603">
    <molecule id="Q05BC3-1"/>
</dbReference>
<dbReference type="ProteomicsDB" id="275604">
    <molecule id="Q05BC3-2"/>
</dbReference>
<dbReference type="ProteomicsDB" id="275605">
    <molecule id="Q05BC3-3"/>
</dbReference>
<dbReference type="Antibodypedia" id="27460">
    <property type="antibodies" value="80 antibodies from 25 providers"/>
</dbReference>
<dbReference type="Ensembl" id="ENSMUST00000054955.14">
    <molecule id="Q05BC3-2"/>
    <property type="protein sequence ID" value="ENSMUSP00000057209.8"/>
    <property type="gene ID" value="ENSMUSG00000058070.15"/>
</dbReference>
<dbReference type="Ensembl" id="ENSMUST00000109860.8">
    <molecule id="Q05BC3-1"/>
    <property type="protein sequence ID" value="ENSMUSP00000105486.2"/>
    <property type="gene ID" value="ENSMUSG00000058070.15"/>
</dbReference>
<dbReference type="GeneID" id="68519"/>
<dbReference type="KEGG" id="mmu:68519"/>
<dbReference type="UCSC" id="uc007ozq.2">
    <molecule id="Q05BC3-1"/>
    <property type="organism name" value="mouse"/>
</dbReference>
<dbReference type="AGR" id="MGI:1915769"/>
<dbReference type="CTD" id="2009"/>
<dbReference type="MGI" id="MGI:1915769">
    <property type="gene designation" value="Eml1"/>
</dbReference>
<dbReference type="VEuPathDB" id="HostDB:ENSMUSG00000058070"/>
<dbReference type="eggNOG" id="KOG2106">
    <property type="taxonomic scope" value="Eukaryota"/>
</dbReference>
<dbReference type="GeneTree" id="ENSGT00940000153887"/>
<dbReference type="HOGENOM" id="CLU_011754_2_0_1"/>
<dbReference type="InParanoid" id="Q05BC3"/>
<dbReference type="OMA" id="DIQWFTH"/>
<dbReference type="OrthoDB" id="47802at2759"/>
<dbReference type="PhylomeDB" id="Q05BC3"/>
<dbReference type="TreeFam" id="TF317832"/>
<dbReference type="BioGRID-ORCS" id="68519">
    <property type="hits" value="5 hits in 78 CRISPR screens"/>
</dbReference>
<dbReference type="ChiTaRS" id="Eml1">
    <property type="organism name" value="mouse"/>
</dbReference>
<dbReference type="PRO" id="PR:Q05BC3"/>
<dbReference type="Proteomes" id="UP000000589">
    <property type="component" value="Chromosome 12"/>
</dbReference>
<dbReference type="RNAct" id="Q05BC3">
    <property type="molecule type" value="protein"/>
</dbReference>
<dbReference type="Bgee" id="ENSMUSG00000058070">
    <property type="expression patterns" value="Expressed in interventricular septum and 171 other cell types or tissues"/>
</dbReference>
<dbReference type="ExpressionAtlas" id="Q05BC3">
    <property type="expression patterns" value="baseline and differential"/>
</dbReference>
<dbReference type="GO" id="GO:0005829">
    <property type="term" value="C:cytosol"/>
    <property type="evidence" value="ECO:0000314"/>
    <property type="project" value="UniProtKB"/>
</dbReference>
<dbReference type="GO" id="GO:0005874">
    <property type="term" value="C:microtubule"/>
    <property type="evidence" value="ECO:0000250"/>
    <property type="project" value="UniProtKB"/>
</dbReference>
<dbReference type="GO" id="GO:0048471">
    <property type="term" value="C:perinuclear region of cytoplasm"/>
    <property type="evidence" value="ECO:0007669"/>
    <property type="project" value="UniProtKB-SubCell"/>
</dbReference>
<dbReference type="GO" id="GO:0008017">
    <property type="term" value="F:microtubule binding"/>
    <property type="evidence" value="ECO:0000314"/>
    <property type="project" value="UniProtKB"/>
</dbReference>
<dbReference type="GO" id="GO:0015631">
    <property type="term" value="F:tubulin binding"/>
    <property type="evidence" value="ECO:0000250"/>
    <property type="project" value="UniProtKB"/>
</dbReference>
<dbReference type="GO" id="GO:0007420">
    <property type="term" value="P:brain development"/>
    <property type="evidence" value="ECO:0000315"/>
    <property type="project" value="UniProtKB"/>
</dbReference>
<dbReference type="GO" id="GO:0002244">
    <property type="term" value="P:hematopoietic progenitor cell differentiation"/>
    <property type="evidence" value="ECO:0000316"/>
    <property type="project" value="MGI"/>
</dbReference>
<dbReference type="GO" id="GO:0000226">
    <property type="term" value="P:microtubule cytoskeleton organization"/>
    <property type="evidence" value="ECO:0000315"/>
    <property type="project" value="UniProtKB"/>
</dbReference>
<dbReference type="GO" id="GO:0007052">
    <property type="term" value="P:mitotic spindle organization"/>
    <property type="evidence" value="ECO:0000315"/>
    <property type="project" value="UniProtKB"/>
</dbReference>
<dbReference type="GO" id="GO:0007405">
    <property type="term" value="P:neuroblast proliferation"/>
    <property type="evidence" value="ECO:0000315"/>
    <property type="project" value="UniProtKB"/>
</dbReference>
<dbReference type="CDD" id="cd21947">
    <property type="entry name" value="TD_EMAP1"/>
    <property type="match status" value="1"/>
</dbReference>
<dbReference type="FunFam" id="2.130.10.10:FF:000011">
    <property type="entry name" value="Echinoderm microtubule-associated protein-like 2 isoform 1"/>
    <property type="match status" value="1"/>
</dbReference>
<dbReference type="FunFam" id="2.130.10.10:FF:000005">
    <property type="entry name" value="Putative echinoderm microtubule-associated protein-like 1"/>
    <property type="match status" value="1"/>
</dbReference>
<dbReference type="Gene3D" id="2.130.10.10">
    <property type="entry name" value="YVTN repeat-like/Quinoprotein amine dehydrogenase"/>
    <property type="match status" value="2"/>
</dbReference>
<dbReference type="InterPro" id="IPR055442">
    <property type="entry name" value="Beta-prop_EML-like_2nd"/>
</dbReference>
<dbReference type="InterPro" id="IPR055439">
    <property type="entry name" value="Beta-prop_EML_1st"/>
</dbReference>
<dbReference type="InterPro" id="IPR005108">
    <property type="entry name" value="HELP"/>
</dbReference>
<dbReference type="InterPro" id="IPR011047">
    <property type="entry name" value="Quinoprotein_ADH-like_sf"/>
</dbReference>
<dbReference type="InterPro" id="IPR015943">
    <property type="entry name" value="WD40/YVTN_repeat-like_dom_sf"/>
</dbReference>
<dbReference type="InterPro" id="IPR001680">
    <property type="entry name" value="WD40_rpt"/>
</dbReference>
<dbReference type="InterPro" id="IPR050630">
    <property type="entry name" value="WD_repeat_EMAP"/>
</dbReference>
<dbReference type="PANTHER" id="PTHR13720:SF22">
    <property type="entry name" value="ECHINODERM MICROTUBULE-ASSOCIATED PROTEIN-LIKE 1"/>
    <property type="match status" value="1"/>
</dbReference>
<dbReference type="PANTHER" id="PTHR13720">
    <property type="entry name" value="WD-40 REPEAT PROTEIN"/>
    <property type="match status" value="1"/>
</dbReference>
<dbReference type="Pfam" id="PF23409">
    <property type="entry name" value="Beta-prop_EML"/>
    <property type="match status" value="1"/>
</dbReference>
<dbReference type="Pfam" id="PF23414">
    <property type="entry name" value="Beta-prop_EML_2"/>
    <property type="match status" value="1"/>
</dbReference>
<dbReference type="Pfam" id="PF03451">
    <property type="entry name" value="HELP"/>
    <property type="match status" value="1"/>
</dbReference>
<dbReference type="SMART" id="SM00320">
    <property type="entry name" value="WD40"/>
    <property type="match status" value="10"/>
</dbReference>
<dbReference type="SUPFAM" id="SSF50998">
    <property type="entry name" value="Quinoprotein alcohol dehydrogenase-like"/>
    <property type="match status" value="1"/>
</dbReference>
<dbReference type="SUPFAM" id="SSF50960">
    <property type="entry name" value="TolB, C-terminal domain"/>
    <property type="match status" value="1"/>
</dbReference>
<dbReference type="PROSITE" id="PS00678">
    <property type="entry name" value="WD_REPEATS_1"/>
    <property type="match status" value="1"/>
</dbReference>
<dbReference type="PROSITE" id="PS50082">
    <property type="entry name" value="WD_REPEATS_2"/>
    <property type="match status" value="3"/>
</dbReference>
<dbReference type="PROSITE" id="PS50294">
    <property type="entry name" value="WD_REPEATS_REGION"/>
    <property type="match status" value="2"/>
</dbReference>
<reference key="1">
    <citation type="journal article" date="2004" name="Genome Res.">
        <title>The status, quality, and expansion of the NIH full-length cDNA project: the Mammalian Gene Collection (MGC).</title>
        <authorList>
            <consortium name="The MGC Project Team"/>
        </authorList>
    </citation>
    <scope>NUCLEOTIDE SEQUENCE [LARGE SCALE MRNA] (ISOFORMS 1; 2 AND 3)</scope>
    <source>
        <strain>C57BL/6J</strain>
        <tissue>Brain</tissue>
    </source>
</reference>
<reference key="2">
    <citation type="journal article" date="2010" name="Cell">
        <title>A tissue-specific atlas of mouse protein phosphorylation and expression.</title>
        <authorList>
            <person name="Huttlin E.L."/>
            <person name="Jedrychowski M.P."/>
            <person name="Elias J.E."/>
            <person name="Goswami T."/>
            <person name="Rad R."/>
            <person name="Beausoleil S.A."/>
            <person name="Villen J."/>
            <person name="Haas W."/>
            <person name="Sowa M.E."/>
            <person name="Gygi S.P."/>
        </authorList>
    </citation>
    <scope>IDENTIFICATION BY MASS SPECTROMETRY [LARGE SCALE ANALYSIS]</scope>
    <source>
        <tissue>Brain</tissue>
        <tissue>Heart</tissue>
        <tissue>Kidney</tissue>
        <tissue>Lung</tissue>
        <tissue>Spleen</tissue>
    </source>
</reference>
<reference key="3">
    <citation type="journal article" date="2014" name="Nat. Neurosci.">
        <title>Mutations in Eml1 lead to ectopic progenitors and neuronal heterotopia in mouse and human.</title>
        <authorList>
            <person name="Kielar M."/>
            <person name="Tuy F.P."/>
            <person name="Bizzotto S."/>
            <person name="Lebrand C."/>
            <person name="de Juan Romero C."/>
            <person name="Poirier K."/>
            <person name="Oegema R."/>
            <person name="Mancini G.M."/>
            <person name="Bahi-Buisson N."/>
            <person name="Olaso R."/>
            <person name="Le Moing A.G."/>
            <person name="Boutourlinsky K."/>
            <person name="Boucher D."/>
            <person name="Carpentier W."/>
            <person name="Berquin P."/>
            <person name="Deleuze J.F."/>
            <person name="Belvindrah R."/>
            <person name="Borrell V."/>
            <person name="Welker E."/>
            <person name="Chelly J."/>
            <person name="Croquelois A."/>
            <person name="Francis F."/>
        </authorList>
    </citation>
    <scope>FUNCTION</scope>
    <scope>ROLE IN DISEASE</scope>
    <scope>DEVELOPMENTAL STAGE</scope>
    <scope>TISSUE SPECIFICITY</scope>
    <scope>SUBCELLULAR LOCATION</scope>
    <scope>MUTAGENESIS OF THR-242</scope>
    <scope>SUBUNIT</scope>
</reference>
<reference key="4">
    <citation type="journal article" date="2019" name="Exp. Cell Res.">
        <title>Fam208a orchestrates interaction protein network essential for early embryonic development and cell division.</title>
        <authorList>
            <person name="Gresakova V."/>
            <person name="Novosadova V."/>
            <person name="Prochazkova M."/>
            <person name="Bhargava S."/>
            <person name="Jenickova I."/>
            <person name="Prochazka J."/>
            <person name="Sedlacek R."/>
        </authorList>
    </citation>
    <scope>INTERACTION WITH TASOR</scope>
    <scope>TISSUE SPECIFICITY</scope>
</reference>
<protein>
    <recommendedName>
        <fullName>Echinoderm microtubule-associated protein-like 1</fullName>
        <shortName>EMAP-1</shortName>
    </recommendedName>
</protein>
<sequence>MEDGFSSYSSLYDTSSLLQFCNDDSASAASSMEVSDRIASLEQRVQMQEDDIQLLKSALADVVRRLNITEEQQAVLNRKGPTKARPLGQTLPLRTTVNNGTVLPKKPSASLPAPSGARKEVVVPVTKSINRTSSSERVSPGGRRESSGDSKGSRNRTGSTSSSSSGKKNSESKPKEPAFSPEEGYVKMFLRGRPVTMYMPKDQVDSYSLEAKAELPTKRLKLEWVYGYRGRDCRNNLYLLPTGETVYFIASVVVLYNVEEQLQRHYAGHNDDVKCLAVHPDRITIATGQVAGTSKDGKQLPPHVRIWDSVTLNTLHVIGIGFFDRAVTCIAFSKSNGGGHLCAVDDSNDHVLSVWDWQKEERLADVKCSNEAVFAADFHPTDTNIIVTCGKSHLYFWTLEGNSLNKKQGLFEKQEKPKFVLCVTFSENGDTITGDSSGNILVWGKGTNRISYAVQGAHEGGIFALCMLRDGTLVSGGGKDRRLISWNGNYQKLHKAEIPEQFGPIRTVAEGKGNVILIGTTRNFVLQGTLSGDFTPITQGHTDELWGLAIHASKPQFLTCGHDKHATLWDAVGHRPVWDKIIEDPAQSSGFHPSGSVVAVGTLTGRWFVFDTETKDLVTVHTDGNEQLSVMRYSPDGNFLAIGSHDNCIYIYGVTDNGRKYTRVGKCSGHSSFITHLDWSVNSQFLVSNSGDYEILYWVPSACKQVVSVETTRDIEWATYTCTLGFHVFGVWPEGSDGTDINAVCRAHERKLLCTGDDFGKVHLFSYPCSQFRAPSHIYSGHSSHVTNVDFLCEDSHLISTGGKDTSIMQWRVI</sequence>